<name>ARNE_ECOL6</name>
<proteinExistence type="inferred from homology"/>
<sequence>MIWLTLVFASLLSVAGQLCQKQATCFATVNKRRKHIVLWLGLALACLGLAMVLWLLVLQNVPVGIAYPMLSLNFVWVTLAAVKLWHEPVSLRHWCGVAFIIGGIVILGSTV</sequence>
<reference key="1">
    <citation type="journal article" date="2002" name="Proc. Natl. Acad. Sci. U.S.A.">
        <title>Extensive mosaic structure revealed by the complete genome sequence of uropathogenic Escherichia coli.</title>
        <authorList>
            <person name="Welch R.A."/>
            <person name="Burland V."/>
            <person name="Plunkett G. III"/>
            <person name="Redford P."/>
            <person name="Roesch P."/>
            <person name="Rasko D."/>
            <person name="Buckles E.L."/>
            <person name="Liou S.-R."/>
            <person name="Boutin A."/>
            <person name="Hackett J."/>
            <person name="Stroud D."/>
            <person name="Mayhew G.F."/>
            <person name="Rose D.J."/>
            <person name="Zhou S."/>
            <person name="Schwartz D.C."/>
            <person name="Perna N.T."/>
            <person name="Mobley H.L.T."/>
            <person name="Donnenberg M.S."/>
            <person name="Blattner F.R."/>
        </authorList>
    </citation>
    <scope>NUCLEOTIDE SEQUENCE [LARGE SCALE GENOMIC DNA]</scope>
    <source>
        <strain>CFT073 / ATCC 700928 / UPEC</strain>
    </source>
</reference>
<protein>
    <recommendedName>
        <fullName evidence="2">Probable 4-amino-4-deoxy-L-arabinose-phosphoundecaprenol flippase subunit ArnE</fullName>
        <shortName evidence="2">L-Ara4N-phosphoundecaprenol flippase subunit ArnE</shortName>
    </recommendedName>
    <alternativeName>
        <fullName evidence="2">Undecaprenyl phosphate-aminoarabinose flippase subunit ArnE</fullName>
    </alternativeName>
</protein>
<accession>Q8FFL8</accession>
<comment type="function">
    <text evidence="2">Translocates 4-amino-4-deoxy-L-arabinose-phosphoundecaprenol (alpha-L-Ara4N-phosphoundecaprenol) from the cytoplasmic to the periplasmic side of the inner membrane.</text>
</comment>
<comment type="pathway">
    <text evidence="2">Bacterial outer membrane biogenesis; lipopolysaccharide biosynthesis.</text>
</comment>
<comment type="subunit">
    <text evidence="2">Heterodimer of ArnE and ArnF.</text>
</comment>
<comment type="subcellular location">
    <subcellularLocation>
        <location evidence="2">Cell inner membrane</location>
        <topology evidence="2">Multi-pass membrane protein</topology>
    </subcellularLocation>
</comment>
<comment type="similarity">
    <text evidence="2">Belongs to the ArnE family.</text>
</comment>
<keyword id="KW-0997">Cell inner membrane</keyword>
<keyword id="KW-1003">Cell membrane</keyword>
<keyword id="KW-0441">Lipid A biosynthesis</keyword>
<keyword id="KW-0444">Lipid biosynthesis</keyword>
<keyword id="KW-0443">Lipid metabolism</keyword>
<keyword id="KW-0448">Lipopolysaccharide biosynthesis</keyword>
<keyword id="KW-0472">Membrane</keyword>
<keyword id="KW-1185">Reference proteome</keyword>
<keyword id="KW-0812">Transmembrane</keyword>
<keyword id="KW-1133">Transmembrane helix</keyword>
<keyword id="KW-0813">Transport</keyword>
<dbReference type="EMBL" id="AE014075">
    <property type="protein sequence ID" value="AAN81254.1"/>
    <property type="molecule type" value="Genomic_DNA"/>
</dbReference>
<dbReference type="RefSeq" id="WP_000638018.1">
    <property type="nucleotide sequence ID" value="NZ_CP051263.1"/>
</dbReference>
<dbReference type="SMR" id="Q8FFL8"/>
<dbReference type="STRING" id="199310.c2800"/>
<dbReference type="DNASU" id="1038325"/>
<dbReference type="KEGG" id="ecc:c2800"/>
<dbReference type="eggNOG" id="COG2076">
    <property type="taxonomic scope" value="Bacteria"/>
</dbReference>
<dbReference type="HOGENOM" id="CLU_131462_5_1_6"/>
<dbReference type="BioCyc" id="ECOL199310:C2800-MONOMER"/>
<dbReference type="UniPathway" id="UPA00030"/>
<dbReference type="Proteomes" id="UP000001410">
    <property type="component" value="Chromosome"/>
</dbReference>
<dbReference type="GO" id="GO:0005886">
    <property type="term" value="C:plasma membrane"/>
    <property type="evidence" value="ECO:0007669"/>
    <property type="project" value="UniProtKB-SubCell"/>
</dbReference>
<dbReference type="GO" id="GO:1901505">
    <property type="term" value="F:carbohydrate derivative transmembrane transporter activity"/>
    <property type="evidence" value="ECO:0007669"/>
    <property type="project" value="InterPro"/>
</dbReference>
<dbReference type="GO" id="GO:0009245">
    <property type="term" value="P:lipid A biosynthetic process"/>
    <property type="evidence" value="ECO:0007669"/>
    <property type="project" value="UniProtKB-UniRule"/>
</dbReference>
<dbReference type="GO" id="GO:0009103">
    <property type="term" value="P:lipopolysaccharide biosynthetic process"/>
    <property type="evidence" value="ECO:0007669"/>
    <property type="project" value="UniProtKB-UniRule"/>
</dbReference>
<dbReference type="FunFam" id="1.10.3730.20:FF:000002">
    <property type="entry name" value="Probable 4-amino-4-deoxy-L-arabinose-phosphoundecaprenol flippase subunit ArnE"/>
    <property type="match status" value="1"/>
</dbReference>
<dbReference type="Gene3D" id="1.10.3730.20">
    <property type="match status" value="1"/>
</dbReference>
<dbReference type="HAMAP" id="MF_01869">
    <property type="entry name" value="Flippase_ArnE"/>
    <property type="match status" value="1"/>
</dbReference>
<dbReference type="InterPro" id="IPR000620">
    <property type="entry name" value="EamA_dom"/>
</dbReference>
<dbReference type="InterPro" id="IPR022883">
    <property type="entry name" value="Flippase_ArnE"/>
</dbReference>
<dbReference type="InterPro" id="IPR000390">
    <property type="entry name" value="Small_drug/metabolite_transptr"/>
</dbReference>
<dbReference type="NCBIfam" id="NF011625">
    <property type="entry name" value="PRK15051.1"/>
    <property type="match status" value="1"/>
</dbReference>
<dbReference type="PANTHER" id="PTHR30561:SF23">
    <property type="entry name" value="4-AMINO-4-DEOXY-L-ARABINOSE-PHOSPHOUNDECAPRENOL FLIPPASE SUBUNIT ARNE-RELATED"/>
    <property type="match status" value="1"/>
</dbReference>
<dbReference type="PANTHER" id="PTHR30561">
    <property type="entry name" value="SMR FAMILY PROTON-DEPENDENT DRUG EFFLUX TRANSPORTER SUGE"/>
    <property type="match status" value="1"/>
</dbReference>
<dbReference type="Pfam" id="PF00892">
    <property type="entry name" value="EamA"/>
    <property type="match status" value="1"/>
</dbReference>
<dbReference type="SUPFAM" id="SSF103481">
    <property type="entry name" value="Multidrug resistance efflux transporter EmrE"/>
    <property type="match status" value="1"/>
</dbReference>
<organism>
    <name type="scientific">Escherichia coli O6:H1 (strain CFT073 / ATCC 700928 / UPEC)</name>
    <dbReference type="NCBI Taxonomy" id="199310"/>
    <lineage>
        <taxon>Bacteria</taxon>
        <taxon>Pseudomonadati</taxon>
        <taxon>Pseudomonadota</taxon>
        <taxon>Gammaproteobacteria</taxon>
        <taxon>Enterobacterales</taxon>
        <taxon>Enterobacteriaceae</taxon>
        <taxon>Escherichia</taxon>
    </lineage>
</organism>
<evidence type="ECO:0000255" key="1"/>
<evidence type="ECO:0000255" key="2">
    <source>
        <dbReference type="HAMAP-Rule" id="MF_01869"/>
    </source>
</evidence>
<gene>
    <name evidence="2" type="primary">arnE</name>
    <name type="ordered locus">c2800</name>
</gene>
<feature type="chain" id="PRO_0000382969" description="Probable 4-amino-4-deoxy-L-arabinose-phosphoundecaprenol flippase subunit ArnE">
    <location>
        <begin position="1"/>
        <end position="111"/>
    </location>
</feature>
<feature type="topological domain" description="Cytoplasmic" evidence="1">
    <location>
        <begin position="1"/>
        <end position="35"/>
    </location>
</feature>
<feature type="transmembrane region" description="Helical" evidence="2">
    <location>
        <begin position="36"/>
        <end position="56"/>
    </location>
</feature>
<feature type="topological domain" description="Periplasmic" evidence="1">
    <location>
        <begin position="57"/>
        <end position="60"/>
    </location>
</feature>
<feature type="transmembrane region" description="Helical" evidence="2">
    <location>
        <begin position="61"/>
        <end position="81"/>
    </location>
</feature>
<feature type="topological domain" description="Cytoplasmic" evidence="1">
    <location>
        <begin position="82"/>
        <end position="87"/>
    </location>
</feature>
<feature type="transmembrane region" description="Helical" evidence="2">
    <location>
        <begin position="88"/>
        <end position="108"/>
    </location>
</feature>
<feature type="topological domain" description="Periplasmic" evidence="1">
    <location>
        <begin position="109"/>
        <end position="111"/>
    </location>
</feature>
<feature type="domain" description="EamA" evidence="2">
    <location>
        <begin position="40"/>
        <end position="109"/>
    </location>
</feature>